<feature type="chain" id="PRO_1000030463" description="D-alanine--D-alanine ligase">
    <location>
        <begin position="1"/>
        <end position="377"/>
    </location>
</feature>
<feature type="domain" description="ATP-grasp" evidence="2">
    <location>
        <begin position="140"/>
        <end position="349"/>
    </location>
</feature>
<feature type="binding site" evidence="2">
    <location>
        <begin position="170"/>
        <end position="225"/>
    </location>
    <ligand>
        <name>ATP</name>
        <dbReference type="ChEBI" id="CHEBI:30616"/>
    </ligand>
</feature>
<feature type="binding site" evidence="2">
    <location>
        <position position="303"/>
    </location>
    <ligand>
        <name>Mg(2+)</name>
        <dbReference type="ChEBI" id="CHEBI:18420"/>
        <label>1</label>
    </ligand>
</feature>
<feature type="binding site" evidence="2">
    <location>
        <position position="316"/>
    </location>
    <ligand>
        <name>Mg(2+)</name>
        <dbReference type="ChEBI" id="CHEBI:18420"/>
        <label>1</label>
    </ligand>
</feature>
<feature type="binding site" evidence="2">
    <location>
        <position position="316"/>
    </location>
    <ligand>
        <name>Mg(2+)</name>
        <dbReference type="ChEBI" id="CHEBI:18420"/>
        <label>2</label>
    </ligand>
</feature>
<feature type="binding site" evidence="2">
    <location>
        <position position="318"/>
    </location>
    <ligand>
        <name>Mg(2+)</name>
        <dbReference type="ChEBI" id="CHEBI:18420"/>
        <label>2</label>
    </ligand>
</feature>
<feature type="strand" evidence="3">
    <location>
        <begin position="4"/>
        <end position="11"/>
    </location>
</feature>
<feature type="helix" evidence="3">
    <location>
        <begin position="17"/>
        <end position="34"/>
    </location>
</feature>
<feature type="strand" evidence="3">
    <location>
        <begin position="35"/>
        <end position="44"/>
    </location>
</feature>
<feature type="helix" evidence="3">
    <location>
        <begin position="53"/>
        <end position="60"/>
    </location>
</feature>
<feature type="helix" evidence="3">
    <location>
        <begin position="65"/>
        <end position="73"/>
    </location>
</feature>
<feature type="helix" evidence="3">
    <location>
        <begin position="86"/>
        <end position="89"/>
    </location>
</feature>
<feature type="strand" evidence="3">
    <location>
        <begin position="95"/>
        <end position="100"/>
    </location>
</feature>
<feature type="turn" evidence="3">
    <location>
        <begin position="104"/>
        <end position="106"/>
    </location>
</feature>
<feature type="strand" evidence="3">
    <location>
        <begin position="107"/>
        <end position="109"/>
    </location>
</feature>
<feature type="helix" evidence="3">
    <location>
        <begin position="110"/>
        <end position="117"/>
    </location>
</feature>
<feature type="strand" evidence="3">
    <location>
        <begin position="122"/>
        <end position="124"/>
    </location>
</feature>
<feature type="helix" evidence="3">
    <location>
        <begin position="127"/>
        <end position="134"/>
    </location>
</feature>
<feature type="helix" evidence="3">
    <location>
        <begin position="136"/>
        <end position="144"/>
    </location>
</feature>
<feature type="turn" evidence="3">
    <location>
        <begin position="145"/>
        <end position="147"/>
    </location>
</feature>
<feature type="strand" evidence="3">
    <location>
        <begin position="153"/>
        <end position="156"/>
    </location>
</feature>
<feature type="helix" evidence="3">
    <location>
        <begin position="160"/>
        <end position="163"/>
    </location>
</feature>
<feature type="helix" evidence="3">
    <location>
        <begin position="166"/>
        <end position="173"/>
    </location>
</feature>
<feature type="strand" evidence="3">
    <location>
        <begin position="177"/>
        <end position="183"/>
    </location>
</feature>
<feature type="turn" evidence="3">
    <location>
        <begin position="186"/>
        <end position="189"/>
    </location>
</feature>
<feature type="strand" evidence="3">
    <location>
        <begin position="190"/>
        <end position="193"/>
    </location>
</feature>
<feature type="helix" evidence="3">
    <location>
        <begin position="196"/>
        <end position="206"/>
    </location>
</feature>
<feature type="turn" evidence="3">
    <location>
        <begin position="207"/>
        <end position="209"/>
    </location>
</feature>
<feature type="strand" evidence="3">
    <location>
        <begin position="213"/>
        <end position="217"/>
    </location>
</feature>
<feature type="strand" evidence="3">
    <location>
        <begin position="224"/>
        <end position="234"/>
    </location>
</feature>
<feature type="strand" evidence="3">
    <location>
        <begin position="236"/>
        <end position="244"/>
    </location>
</feature>
<feature type="strand" evidence="3">
    <location>
        <begin position="248"/>
        <end position="252"/>
    </location>
</feature>
<feature type="helix" evidence="3">
    <location>
        <begin position="257"/>
        <end position="260"/>
    </location>
</feature>
<feature type="strand" evidence="3">
    <location>
        <begin position="268"/>
        <end position="272"/>
    </location>
</feature>
<feature type="helix" evidence="3">
    <location>
        <begin position="277"/>
        <end position="293"/>
    </location>
</feature>
<feature type="strand" evidence="3">
    <location>
        <begin position="298"/>
        <end position="306"/>
    </location>
</feature>
<feature type="strand" evidence="3">
    <location>
        <begin position="312"/>
        <end position="320"/>
    </location>
</feature>
<feature type="helix" evidence="3">
    <location>
        <begin position="328"/>
        <end position="330"/>
    </location>
</feature>
<feature type="helix" evidence="3">
    <location>
        <begin position="332"/>
        <end position="336"/>
    </location>
</feature>
<feature type="helix" evidence="3">
    <location>
        <begin position="340"/>
        <end position="360"/>
    </location>
</feature>
<evidence type="ECO:0000250" key="1"/>
<evidence type="ECO:0000255" key="2">
    <source>
        <dbReference type="HAMAP-Rule" id="MF_00047"/>
    </source>
</evidence>
<evidence type="ECO:0007829" key="3">
    <source>
        <dbReference type="PDB" id="1EHI"/>
    </source>
</evidence>
<accession>Q03ZI1</accession>
<keyword id="KW-0002">3D-structure</keyword>
<keyword id="KW-0067">ATP-binding</keyword>
<keyword id="KW-0133">Cell shape</keyword>
<keyword id="KW-0961">Cell wall biogenesis/degradation</keyword>
<keyword id="KW-0963">Cytoplasm</keyword>
<keyword id="KW-0436">Ligase</keyword>
<keyword id="KW-0460">Magnesium</keyword>
<keyword id="KW-0464">Manganese</keyword>
<keyword id="KW-0479">Metal-binding</keyword>
<keyword id="KW-0547">Nucleotide-binding</keyword>
<keyword id="KW-0573">Peptidoglycan synthesis</keyword>
<keyword id="KW-1185">Reference proteome</keyword>
<dbReference type="EC" id="6.3.2.4" evidence="2"/>
<dbReference type="EMBL" id="CP000414">
    <property type="protein sequence ID" value="ABJ61391.1"/>
    <property type="molecule type" value="Genomic_DNA"/>
</dbReference>
<dbReference type="RefSeq" id="WP_011679162.1">
    <property type="nucleotide sequence ID" value="NC_008531.1"/>
</dbReference>
<dbReference type="PDB" id="1EHI">
    <property type="method" value="X-ray"/>
    <property type="resolution" value="2.38 A"/>
    <property type="chains" value="A/B=1-377"/>
</dbReference>
<dbReference type="PDBsum" id="1EHI"/>
<dbReference type="SMR" id="Q03ZI1"/>
<dbReference type="EnsemblBacteria" id="ABJ61391">
    <property type="protein sequence ID" value="ABJ61391"/>
    <property type="gene ID" value="LEUM_0264"/>
</dbReference>
<dbReference type="GeneID" id="29575937"/>
<dbReference type="KEGG" id="lme:LEUM_0264"/>
<dbReference type="eggNOG" id="COG1181">
    <property type="taxonomic scope" value="Bacteria"/>
</dbReference>
<dbReference type="HOGENOM" id="CLU_039268_0_1_9"/>
<dbReference type="UniPathway" id="UPA00219"/>
<dbReference type="EvolutionaryTrace" id="Q03ZI1"/>
<dbReference type="Proteomes" id="UP000000362">
    <property type="component" value="Chromosome"/>
</dbReference>
<dbReference type="GO" id="GO:0005829">
    <property type="term" value="C:cytosol"/>
    <property type="evidence" value="ECO:0007669"/>
    <property type="project" value="TreeGrafter"/>
</dbReference>
<dbReference type="GO" id="GO:0005524">
    <property type="term" value="F:ATP binding"/>
    <property type="evidence" value="ECO:0007669"/>
    <property type="project" value="UniProtKB-KW"/>
</dbReference>
<dbReference type="GO" id="GO:0008716">
    <property type="term" value="F:D-alanine-D-alanine ligase activity"/>
    <property type="evidence" value="ECO:0007669"/>
    <property type="project" value="UniProtKB-UniRule"/>
</dbReference>
<dbReference type="GO" id="GO:0046872">
    <property type="term" value="F:metal ion binding"/>
    <property type="evidence" value="ECO:0007669"/>
    <property type="project" value="UniProtKB-KW"/>
</dbReference>
<dbReference type="GO" id="GO:0071555">
    <property type="term" value="P:cell wall organization"/>
    <property type="evidence" value="ECO:0007669"/>
    <property type="project" value="UniProtKB-KW"/>
</dbReference>
<dbReference type="GO" id="GO:0009252">
    <property type="term" value="P:peptidoglycan biosynthetic process"/>
    <property type="evidence" value="ECO:0007669"/>
    <property type="project" value="UniProtKB-UniRule"/>
</dbReference>
<dbReference type="GO" id="GO:0008360">
    <property type="term" value="P:regulation of cell shape"/>
    <property type="evidence" value="ECO:0007669"/>
    <property type="project" value="UniProtKB-KW"/>
</dbReference>
<dbReference type="Gene3D" id="3.40.50.20">
    <property type="match status" value="1"/>
</dbReference>
<dbReference type="Gene3D" id="3.30.1490.20">
    <property type="entry name" value="ATP-grasp fold, A domain"/>
    <property type="match status" value="1"/>
</dbReference>
<dbReference type="Gene3D" id="3.30.470.20">
    <property type="entry name" value="ATP-grasp fold, B domain"/>
    <property type="match status" value="1"/>
</dbReference>
<dbReference type="HAMAP" id="MF_00047">
    <property type="entry name" value="Dala_Dala_lig"/>
    <property type="match status" value="1"/>
</dbReference>
<dbReference type="InterPro" id="IPR011761">
    <property type="entry name" value="ATP-grasp"/>
</dbReference>
<dbReference type="InterPro" id="IPR013815">
    <property type="entry name" value="ATP_grasp_subdomain_1"/>
</dbReference>
<dbReference type="InterPro" id="IPR000291">
    <property type="entry name" value="D-Ala_lig_Van_CS"/>
</dbReference>
<dbReference type="InterPro" id="IPR005905">
    <property type="entry name" value="D_ala_D_ala"/>
</dbReference>
<dbReference type="InterPro" id="IPR011095">
    <property type="entry name" value="Dala_Dala_lig_C"/>
</dbReference>
<dbReference type="InterPro" id="IPR011127">
    <property type="entry name" value="Dala_Dala_lig_N"/>
</dbReference>
<dbReference type="InterPro" id="IPR016185">
    <property type="entry name" value="PreATP-grasp_dom_sf"/>
</dbReference>
<dbReference type="NCBIfam" id="TIGR01205">
    <property type="entry name" value="D_ala_D_alaTIGR"/>
    <property type="match status" value="1"/>
</dbReference>
<dbReference type="NCBIfam" id="NF002528">
    <property type="entry name" value="PRK01966.1-4"/>
    <property type="match status" value="1"/>
</dbReference>
<dbReference type="PANTHER" id="PTHR23132">
    <property type="entry name" value="D-ALANINE--D-ALANINE LIGASE"/>
    <property type="match status" value="1"/>
</dbReference>
<dbReference type="PANTHER" id="PTHR23132:SF25">
    <property type="entry name" value="D-ALANINE--D-ALANINE LIGASE A"/>
    <property type="match status" value="1"/>
</dbReference>
<dbReference type="Pfam" id="PF07478">
    <property type="entry name" value="Dala_Dala_lig_C"/>
    <property type="match status" value="1"/>
</dbReference>
<dbReference type="Pfam" id="PF01820">
    <property type="entry name" value="Dala_Dala_lig_N"/>
    <property type="match status" value="1"/>
</dbReference>
<dbReference type="PIRSF" id="PIRSF039102">
    <property type="entry name" value="Ddl/VanB"/>
    <property type="match status" value="1"/>
</dbReference>
<dbReference type="SUPFAM" id="SSF56059">
    <property type="entry name" value="Glutathione synthetase ATP-binding domain-like"/>
    <property type="match status" value="1"/>
</dbReference>
<dbReference type="SUPFAM" id="SSF52440">
    <property type="entry name" value="PreATP-grasp domain"/>
    <property type="match status" value="1"/>
</dbReference>
<dbReference type="PROSITE" id="PS50975">
    <property type="entry name" value="ATP_GRASP"/>
    <property type="match status" value="1"/>
</dbReference>
<dbReference type="PROSITE" id="PS00843">
    <property type="entry name" value="DALA_DALA_LIGASE_1"/>
    <property type="match status" value="1"/>
</dbReference>
<dbReference type="PROSITE" id="PS00844">
    <property type="entry name" value="DALA_DALA_LIGASE_2"/>
    <property type="match status" value="1"/>
</dbReference>
<proteinExistence type="evidence at protein level"/>
<sequence length="377" mass="41826">MTKKRVALIFGGNSSEHDVSKRSAQNFYNAIEATGKYEIIVFAIAQNGFFLDTESSKKILALEDEQPIVDAFMKTVDASDPLARIHALKSAGDFDIFFPVVHGNLGEDGTLQGLFKLLDKPYVGAPLRGHAVSFDKALTKELLTVNGIRNTKYIVVDPESANNWSWDKIVAELGNIVFVKAANQGSSVGISRVTNAEEYTEALSDSFQYDYKVLIEEAVNGARELEVGVIGNDQPLVSEIGAHTVPNQGSGDGWYDYNNKFVDNSAVHFEIPAQLSPEVTKEVKQMALDAYKVLNLRGEARMDFLLDENNVPYLGEPNTLPGFTNMSLFKRLWDYSDINNAKLVDMLIDYGFEDFAQNKKLSYSFVSLGEEKIGKFN</sequence>
<protein>
    <recommendedName>
        <fullName evidence="2">D-alanine--D-alanine ligase</fullName>
        <ecNumber evidence="2">6.3.2.4</ecNumber>
    </recommendedName>
    <alternativeName>
        <fullName evidence="2">D-Ala-D-Ala ligase</fullName>
    </alternativeName>
    <alternativeName>
        <fullName evidence="2">D-alanylalanine synthetase</fullName>
    </alternativeName>
</protein>
<reference key="1">
    <citation type="journal article" date="2006" name="Proc. Natl. Acad. Sci. U.S.A.">
        <title>Comparative genomics of the lactic acid bacteria.</title>
        <authorList>
            <person name="Makarova K.S."/>
            <person name="Slesarev A."/>
            <person name="Wolf Y.I."/>
            <person name="Sorokin A."/>
            <person name="Mirkin B."/>
            <person name="Koonin E.V."/>
            <person name="Pavlov A."/>
            <person name="Pavlova N."/>
            <person name="Karamychev V."/>
            <person name="Polouchine N."/>
            <person name="Shakhova V."/>
            <person name="Grigoriev I."/>
            <person name="Lou Y."/>
            <person name="Rohksar D."/>
            <person name="Lucas S."/>
            <person name="Huang K."/>
            <person name="Goodstein D.M."/>
            <person name="Hawkins T."/>
            <person name="Plengvidhya V."/>
            <person name="Welker D."/>
            <person name="Hughes J."/>
            <person name="Goh Y."/>
            <person name="Benson A."/>
            <person name="Baldwin K."/>
            <person name="Lee J.-H."/>
            <person name="Diaz-Muniz I."/>
            <person name="Dosti B."/>
            <person name="Smeianov V."/>
            <person name="Wechter W."/>
            <person name="Barabote R."/>
            <person name="Lorca G."/>
            <person name="Altermann E."/>
            <person name="Barrangou R."/>
            <person name="Ganesan B."/>
            <person name="Xie Y."/>
            <person name="Rawsthorne H."/>
            <person name="Tamir D."/>
            <person name="Parker C."/>
            <person name="Breidt F."/>
            <person name="Broadbent J.R."/>
            <person name="Hutkins R."/>
            <person name="O'Sullivan D."/>
            <person name="Steele J."/>
            <person name="Unlu G."/>
            <person name="Saier M.H. Jr."/>
            <person name="Klaenhammer T."/>
            <person name="Richardson P."/>
            <person name="Kozyavkin S."/>
            <person name="Weimer B.C."/>
            <person name="Mills D.A."/>
        </authorList>
    </citation>
    <scope>NUCLEOTIDE SEQUENCE [LARGE SCALE GENOMIC DNA]</scope>
    <source>
        <strain>ATCC 8293 / DSM 20343 / BCRC 11652 / CCM 1803 / JCM 6124 / NCDO 523 / NBRC 100496 / NCIMB 8023 / NCTC 12954 / NRRL B-1118 / 37Y</strain>
    </source>
</reference>
<gene>
    <name evidence="2" type="primary">ddl</name>
    <name type="ordered locus">LEUM_0264</name>
</gene>
<organism>
    <name type="scientific">Leuconostoc mesenteroides subsp. mesenteroides (strain ATCC 8293 / DSM 20343 / BCRC 11652 / CCM 1803 / JCM 6124 / NCDO 523 / NBRC 100496 / NCIMB 8023 / NCTC 12954 / NRRL B-1118 / 37Y)</name>
    <dbReference type="NCBI Taxonomy" id="203120"/>
    <lineage>
        <taxon>Bacteria</taxon>
        <taxon>Bacillati</taxon>
        <taxon>Bacillota</taxon>
        <taxon>Bacilli</taxon>
        <taxon>Lactobacillales</taxon>
        <taxon>Lactobacillaceae</taxon>
        <taxon>Leuconostoc</taxon>
    </lineage>
</organism>
<comment type="function">
    <text evidence="2">Cell wall formation.</text>
</comment>
<comment type="catalytic activity">
    <reaction evidence="2">
        <text>2 D-alanine + ATP = D-alanyl-D-alanine + ADP + phosphate + H(+)</text>
        <dbReference type="Rhea" id="RHEA:11224"/>
        <dbReference type="ChEBI" id="CHEBI:15378"/>
        <dbReference type="ChEBI" id="CHEBI:30616"/>
        <dbReference type="ChEBI" id="CHEBI:43474"/>
        <dbReference type="ChEBI" id="CHEBI:57416"/>
        <dbReference type="ChEBI" id="CHEBI:57822"/>
        <dbReference type="ChEBI" id="CHEBI:456216"/>
        <dbReference type="EC" id="6.3.2.4"/>
    </reaction>
</comment>
<comment type="cofactor">
    <cofactor evidence="1">
        <name>Mg(2+)</name>
        <dbReference type="ChEBI" id="CHEBI:18420"/>
    </cofactor>
    <cofactor evidence="1">
        <name>Mn(2+)</name>
        <dbReference type="ChEBI" id="CHEBI:29035"/>
    </cofactor>
    <text evidence="1">Binds 2 magnesium or manganese ions per subunit.</text>
</comment>
<comment type="pathway">
    <text evidence="2">Cell wall biogenesis; peptidoglycan biosynthesis.</text>
</comment>
<comment type="subcellular location">
    <subcellularLocation>
        <location evidence="2">Cytoplasm</location>
    </subcellularLocation>
</comment>
<comment type="similarity">
    <text evidence="2">Belongs to the D-alanine--D-alanine ligase family.</text>
</comment>
<name>DDL_LEUMM</name>